<keyword id="KW-0968">Cytoplasmic vesicle</keyword>
<keyword id="KW-0333">Golgi apparatus</keyword>
<keyword id="KW-0472">Membrane</keyword>
<keyword id="KW-0597">Phosphoprotein</keyword>
<keyword id="KW-0653">Protein transport</keyword>
<keyword id="KW-1185">Reference proteome</keyword>
<keyword id="KW-0813">Transport</keyword>
<accession>D3ZRP6</accession>
<organism>
    <name type="scientific">Rattus norvegicus</name>
    <name type="common">Rat</name>
    <dbReference type="NCBI Taxonomy" id="10116"/>
    <lineage>
        <taxon>Eukaryota</taxon>
        <taxon>Metazoa</taxon>
        <taxon>Chordata</taxon>
        <taxon>Craniata</taxon>
        <taxon>Vertebrata</taxon>
        <taxon>Euteleostomi</taxon>
        <taxon>Mammalia</taxon>
        <taxon>Eutheria</taxon>
        <taxon>Euarchontoglires</taxon>
        <taxon>Glires</taxon>
        <taxon>Rodentia</taxon>
        <taxon>Myomorpha</taxon>
        <taxon>Muroidea</taxon>
        <taxon>Muridae</taxon>
        <taxon>Murinae</taxon>
        <taxon>Rattus</taxon>
    </lineage>
</organism>
<dbReference type="EMBL" id="AABR07069448">
    <property type="status" value="NOT_ANNOTATED_CDS"/>
    <property type="molecule type" value="Genomic_DNA"/>
</dbReference>
<dbReference type="EMBL" id="AABR07073371">
    <property type="status" value="NOT_ANNOTATED_CDS"/>
    <property type="molecule type" value="Genomic_DNA"/>
</dbReference>
<dbReference type="EMBL" id="AC130555">
    <property type="status" value="NOT_ANNOTATED_CDS"/>
    <property type="molecule type" value="Genomic_DNA"/>
</dbReference>
<dbReference type="FunCoup" id="D3ZRP6">
    <property type="interactions" value="112"/>
</dbReference>
<dbReference type="STRING" id="10116.ENSRNOP00000063098"/>
<dbReference type="PhosphoSitePlus" id="D3ZRP6"/>
<dbReference type="jPOST" id="D3ZRP6"/>
<dbReference type="PaxDb" id="10116-ENSRNOP00000063098"/>
<dbReference type="PeptideAtlas" id="D3ZRP6"/>
<dbReference type="UCSC" id="RGD:1561490">
    <property type="organism name" value="rat"/>
</dbReference>
<dbReference type="AGR" id="RGD:1561490"/>
<dbReference type="RGD" id="1561490">
    <property type="gene designation" value="Ap1m2"/>
</dbReference>
<dbReference type="VEuPathDB" id="HostDB:ENSRNOG00000043093"/>
<dbReference type="eggNOG" id="KOG0937">
    <property type="taxonomic scope" value="Eukaryota"/>
</dbReference>
<dbReference type="HOGENOM" id="CLU_026996_0_0_1"/>
<dbReference type="InParanoid" id="D3ZRP6"/>
<dbReference type="TreeFam" id="TF300393"/>
<dbReference type="Reactome" id="R-RNO-2132295">
    <property type="pathway name" value="MHC class II antigen presentation"/>
</dbReference>
<dbReference type="Reactome" id="R-RNO-432720">
    <property type="pathway name" value="Lysosome Vesicle Biogenesis"/>
</dbReference>
<dbReference type="Reactome" id="R-RNO-432722">
    <property type="pathway name" value="Golgi Associated Vesicle Biogenesis"/>
</dbReference>
<dbReference type="PRO" id="PR:D3ZRP6"/>
<dbReference type="Proteomes" id="UP000002494">
    <property type="component" value="Chromosome 8"/>
</dbReference>
<dbReference type="Bgee" id="ENSRNOG00000043093">
    <property type="expression patterns" value="Expressed in duodenum and 13 other cell types or tissues"/>
</dbReference>
<dbReference type="GO" id="GO:0030131">
    <property type="term" value="C:clathrin adaptor complex"/>
    <property type="evidence" value="ECO:0007669"/>
    <property type="project" value="InterPro"/>
</dbReference>
<dbReference type="GO" id="GO:0030136">
    <property type="term" value="C:clathrin-coated vesicle"/>
    <property type="evidence" value="ECO:0000318"/>
    <property type="project" value="GO_Central"/>
</dbReference>
<dbReference type="GO" id="GO:0030665">
    <property type="term" value="C:clathrin-coated vesicle membrane"/>
    <property type="evidence" value="ECO:0007669"/>
    <property type="project" value="UniProtKB-SubCell"/>
</dbReference>
<dbReference type="GO" id="GO:0005794">
    <property type="term" value="C:Golgi apparatus"/>
    <property type="evidence" value="ECO:0007669"/>
    <property type="project" value="UniProtKB-SubCell"/>
</dbReference>
<dbReference type="GO" id="GO:0035615">
    <property type="term" value="F:clathrin adaptor activity"/>
    <property type="evidence" value="ECO:0000318"/>
    <property type="project" value="GO_Central"/>
</dbReference>
<dbReference type="GO" id="GO:0006886">
    <property type="term" value="P:intracellular protein transport"/>
    <property type="evidence" value="ECO:0007669"/>
    <property type="project" value="InterPro"/>
</dbReference>
<dbReference type="GO" id="GO:0016192">
    <property type="term" value="P:vesicle-mediated transport"/>
    <property type="evidence" value="ECO:0000318"/>
    <property type="project" value="GO_Central"/>
</dbReference>
<dbReference type="CDD" id="cd14835">
    <property type="entry name" value="AP1_Mu_N"/>
    <property type="match status" value="1"/>
</dbReference>
<dbReference type="FunFam" id="3.30.450.60:FF:000006">
    <property type="entry name" value="AP-1 complex subunit mu-1 isoform 1"/>
    <property type="match status" value="1"/>
</dbReference>
<dbReference type="FunFam" id="2.60.40.1170:FF:000046">
    <property type="entry name" value="AP-1 complex subunit mu-2"/>
    <property type="match status" value="1"/>
</dbReference>
<dbReference type="Gene3D" id="3.30.450.60">
    <property type="match status" value="1"/>
</dbReference>
<dbReference type="Gene3D" id="2.60.40.1170">
    <property type="entry name" value="Mu homology domain, subdomain B"/>
    <property type="match status" value="2"/>
</dbReference>
<dbReference type="InterPro" id="IPR050431">
    <property type="entry name" value="Adaptor_comp_med_subunit"/>
</dbReference>
<dbReference type="InterPro" id="IPR036168">
    <property type="entry name" value="AP2_Mu_C_sf"/>
</dbReference>
<dbReference type="InterPro" id="IPR022775">
    <property type="entry name" value="AP_mu_sigma_su"/>
</dbReference>
<dbReference type="InterPro" id="IPR001392">
    <property type="entry name" value="Clathrin_mu"/>
</dbReference>
<dbReference type="InterPro" id="IPR018240">
    <property type="entry name" value="Clathrin_mu_CS"/>
</dbReference>
<dbReference type="InterPro" id="IPR011012">
    <property type="entry name" value="Longin-like_dom_sf"/>
</dbReference>
<dbReference type="InterPro" id="IPR028565">
    <property type="entry name" value="MHD"/>
</dbReference>
<dbReference type="PANTHER" id="PTHR10529">
    <property type="entry name" value="AP COMPLEX SUBUNIT MU"/>
    <property type="match status" value="1"/>
</dbReference>
<dbReference type="Pfam" id="PF00928">
    <property type="entry name" value="Adap_comp_sub"/>
    <property type="match status" value="1"/>
</dbReference>
<dbReference type="Pfam" id="PF01217">
    <property type="entry name" value="Clat_adaptor_s"/>
    <property type="match status" value="1"/>
</dbReference>
<dbReference type="PIRSF" id="PIRSF005992">
    <property type="entry name" value="Clathrin_mu"/>
    <property type="match status" value="1"/>
</dbReference>
<dbReference type="PRINTS" id="PR00314">
    <property type="entry name" value="CLATHRINADPT"/>
</dbReference>
<dbReference type="SUPFAM" id="SSF49447">
    <property type="entry name" value="Second domain of Mu2 adaptin subunit (ap50) of ap2 adaptor"/>
    <property type="match status" value="1"/>
</dbReference>
<dbReference type="SUPFAM" id="SSF64356">
    <property type="entry name" value="SNARE-like"/>
    <property type="match status" value="1"/>
</dbReference>
<dbReference type="PROSITE" id="PS00990">
    <property type="entry name" value="CLAT_ADAPTOR_M_1"/>
    <property type="match status" value="1"/>
</dbReference>
<dbReference type="PROSITE" id="PS00991">
    <property type="entry name" value="CLAT_ADAPTOR_M_2"/>
    <property type="match status" value="1"/>
</dbReference>
<dbReference type="PROSITE" id="PS51072">
    <property type="entry name" value="MHD"/>
    <property type="match status" value="1"/>
</dbReference>
<comment type="function">
    <text evidence="2">Subunit of clathrin-associated adaptor protein complex 1 that plays a role in protein sorting in the trans-Golgi network (TGN) and endosomes. The AP complexes mediate the recruitment of clathrin to membranes and the recognition of sorting signals within the cytosolic tails of transmembrane cargo molecules.</text>
</comment>
<comment type="subunit">
    <text evidence="2 4">Adaptor protein complex 1 (AP-1) is a heterotetramer composed of two large adaptins (gamma-type subunit AP1G1 and beta-type subunit AP1B1), a medium adaptin (mu-type subunit AP1M1 or AP1M2) and a small adaptin (sigma-type subunit AP1S1 or AP1S2 or AP1S3) (By similarity). Interacts with P2X4 (PubMed:15985462).</text>
</comment>
<comment type="subcellular location">
    <subcellularLocation>
        <location evidence="2">Golgi apparatus</location>
    </subcellularLocation>
    <subcellularLocation>
        <location evidence="2">Cytoplasmic vesicle</location>
        <location evidence="2">Clathrin-coated vesicle membrane</location>
        <topology evidence="2">Peripheral membrane protein</topology>
        <orientation evidence="2">Cytoplasmic side</orientation>
    </subcellularLocation>
    <text evidence="2">Component of the coat surrounding the cytoplasmic face of coated vesicles located at the Golgi complex.</text>
</comment>
<comment type="PTM">
    <text evidence="1">Phosphorylation of membrane-bound AP1M1/AP1M2 increases its affinity for sorting signals.</text>
</comment>
<comment type="similarity">
    <text evidence="5">Belongs to the adaptor complexes medium subunit family.</text>
</comment>
<gene>
    <name type="primary">Ap1m2</name>
</gene>
<evidence type="ECO:0000250" key="1"/>
<evidence type="ECO:0000250" key="2">
    <source>
        <dbReference type="UniProtKB" id="Q9Y6Q5"/>
    </source>
</evidence>
<evidence type="ECO:0000255" key="3">
    <source>
        <dbReference type="PROSITE-ProRule" id="PRU00404"/>
    </source>
</evidence>
<evidence type="ECO:0000269" key="4">
    <source>
    </source>
</evidence>
<evidence type="ECO:0000305" key="5"/>
<feature type="chain" id="PRO_0000455631" description="AP-1 complex subunit mu-2">
    <location>
        <begin position="1"/>
        <end position="423"/>
    </location>
</feature>
<feature type="domain" description="MHD" evidence="3">
    <location>
        <begin position="168"/>
        <end position="421"/>
    </location>
</feature>
<protein>
    <recommendedName>
        <fullName>AP-1 complex subunit mu-2</fullName>
    </recommendedName>
    <alternativeName>
        <fullName>AP-mu chain family member mu1B</fullName>
    </alternativeName>
    <alternativeName>
        <fullName>Adaptor protein complex AP-1 subunit mu-2</fullName>
    </alternativeName>
    <alternativeName>
        <fullName>Adaptor-related protein complex 1 subunit mu-2</fullName>
    </alternativeName>
    <alternativeName>
        <fullName>Clathrin assembly protein complex 1 mu-2 medium chain 2</fullName>
    </alternativeName>
    <alternativeName>
        <fullName>Golgi adaptor HA1/AP1 adaptin mu-2 subunit</fullName>
    </alternativeName>
    <alternativeName>
        <fullName>Mu-adaptin 2</fullName>
    </alternativeName>
    <alternativeName>
        <fullName>Mu1B-adaptin</fullName>
    </alternativeName>
</protein>
<name>AP1M2_RAT</name>
<proteinExistence type="evidence at protein level"/>
<reference key="1">
    <citation type="journal article" date="2004" name="Nature">
        <title>Genome sequence of the Brown Norway rat yields insights into mammalian evolution.</title>
        <authorList>
            <person name="Gibbs R.A."/>
            <person name="Weinstock G.M."/>
            <person name="Metzker M.L."/>
            <person name="Muzny D.M."/>
            <person name="Sodergren E.J."/>
            <person name="Scherer S."/>
            <person name="Scott G."/>
            <person name="Steffen D."/>
            <person name="Worley K.C."/>
            <person name="Burch P.E."/>
            <person name="Okwuonu G."/>
            <person name="Hines S."/>
            <person name="Lewis L."/>
            <person name="Deramo C."/>
            <person name="Delgado O."/>
            <person name="Dugan-Rocha S."/>
            <person name="Miner G."/>
            <person name="Morgan M."/>
            <person name="Hawes A."/>
            <person name="Gill R."/>
            <person name="Holt R.A."/>
            <person name="Adams M.D."/>
            <person name="Amanatides P.G."/>
            <person name="Baden-Tillson H."/>
            <person name="Barnstead M."/>
            <person name="Chin S."/>
            <person name="Evans C.A."/>
            <person name="Ferriera S."/>
            <person name="Fosler C."/>
            <person name="Glodek A."/>
            <person name="Gu Z."/>
            <person name="Jennings D."/>
            <person name="Kraft C.L."/>
            <person name="Nguyen T."/>
            <person name="Pfannkoch C.M."/>
            <person name="Sitter C."/>
            <person name="Sutton G.G."/>
            <person name="Venter J.C."/>
            <person name="Woodage T."/>
            <person name="Smith D."/>
            <person name="Lee H.-M."/>
            <person name="Gustafson E."/>
            <person name="Cahill P."/>
            <person name="Kana A."/>
            <person name="Doucette-Stamm L."/>
            <person name="Weinstock K."/>
            <person name="Fechtel K."/>
            <person name="Weiss R.B."/>
            <person name="Dunn D.M."/>
            <person name="Green E.D."/>
            <person name="Blakesley R.W."/>
            <person name="Bouffard G.G."/>
            <person name="De Jong P.J."/>
            <person name="Osoegawa K."/>
            <person name="Zhu B."/>
            <person name="Marra M."/>
            <person name="Schein J."/>
            <person name="Bosdet I."/>
            <person name="Fjell C."/>
            <person name="Jones S."/>
            <person name="Krzywinski M."/>
            <person name="Mathewson C."/>
            <person name="Siddiqui A."/>
            <person name="Wye N."/>
            <person name="McPherson J."/>
            <person name="Zhao S."/>
            <person name="Fraser C.M."/>
            <person name="Shetty J."/>
            <person name="Shatsman S."/>
            <person name="Geer K."/>
            <person name="Chen Y."/>
            <person name="Abramzon S."/>
            <person name="Nierman W.C."/>
            <person name="Havlak P.H."/>
            <person name="Chen R."/>
            <person name="Durbin K.J."/>
            <person name="Egan A."/>
            <person name="Ren Y."/>
            <person name="Song X.-Z."/>
            <person name="Li B."/>
            <person name="Liu Y."/>
            <person name="Qin X."/>
            <person name="Cawley S."/>
            <person name="Cooney A.J."/>
            <person name="D'Souza L.M."/>
            <person name="Martin K."/>
            <person name="Wu J.Q."/>
            <person name="Gonzalez-Garay M.L."/>
            <person name="Jackson A.R."/>
            <person name="Kalafus K.J."/>
            <person name="McLeod M.P."/>
            <person name="Milosavljevic A."/>
            <person name="Virk D."/>
            <person name="Volkov A."/>
            <person name="Wheeler D.A."/>
            <person name="Zhang Z."/>
            <person name="Bailey J.A."/>
            <person name="Eichler E.E."/>
            <person name="Tuzun E."/>
            <person name="Birney E."/>
            <person name="Mongin E."/>
            <person name="Ureta-Vidal A."/>
            <person name="Woodwark C."/>
            <person name="Zdobnov E."/>
            <person name="Bork P."/>
            <person name="Suyama M."/>
            <person name="Torrents D."/>
            <person name="Alexandersson M."/>
            <person name="Trask B.J."/>
            <person name="Young J.M."/>
            <person name="Huang H."/>
            <person name="Wang H."/>
            <person name="Xing H."/>
            <person name="Daniels S."/>
            <person name="Gietzen D."/>
            <person name="Schmidt J."/>
            <person name="Stevens K."/>
            <person name="Vitt U."/>
            <person name="Wingrove J."/>
            <person name="Camara F."/>
            <person name="Mar Alba M."/>
            <person name="Abril J.F."/>
            <person name="Guigo R."/>
            <person name="Smit A."/>
            <person name="Dubchak I."/>
            <person name="Rubin E.M."/>
            <person name="Couronne O."/>
            <person name="Poliakov A."/>
            <person name="Huebner N."/>
            <person name="Ganten D."/>
            <person name="Goesele C."/>
            <person name="Hummel O."/>
            <person name="Kreitler T."/>
            <person name="Lee Y.-A."/>
            <person name="Monti J."/>
            <person name="Schulz H."/>
            <person name="Zimdahl H."/>
            <person name="Himmelbauer H."/>
            <person name="Lehrach H."/>
            <person name="Jacob H.J."/>
            <person name="Bromberg S."/>
            <person name="Gullings-Handley J."/>
            <person name="Jensen-Seaman M.I."/>
            <person name="Kwitek A.E."/>
            <person name="Lazar J."/>
            <person name="Pasko D."/>
            <person name="Tonellato P.J."/>
            <person name="Twigger S."/>
            <person name="Ponting C.P."/>
            <person name="Duarte J.M."/>
            <person name="Rice S."/>
            <person name="Goodstadt L."/>
            <person name="Beatson S.A."/>
            <person name="Emes R.D."/>
            <person name="Winter E.E."/>
            <person name="Webber C."/>
            <person name="Brandt P."/>
            <person name="Nyakatura G."/>
            <person name="Adetobi M."/>
            <person name="Chiaromonte F."/>
            <person name="Elnitski L."/>
            <person name="Eswara P."/>
            <person name="Hardison R.C."/>
            <person name="Hou M."/>
            <person name="Kolbe D."/>
            <person name="Makova K."/>
            <person name="Miller W."/>
            <person name="Nekrutenko A."/>
            <person name="Riemer C."/>
            <person name="Schwartz S."/>
            <person name="Taylor J."/>
            <person name="Yang S."/>
            <person name="Zhang Y."/>
            <person name="Lindpaintner K."/>
            <person name="Andrews T.D."/>
            <person name="Caccamo M."/>
            <person name="Clamp M."/>
            <person name="Clarke L."/>
            <person name="Curwen V."/>
            <person name="Durbin R.M."/>
            <person name="Eyras E."/>
            <person name="Searle S.M."/>
            <person name="Cooper G.M."/>
            <person name="Batzoglou S."/>
            <person name="Brudno M."/>
            <person name="Sidow A."/>
            <person name="Stone E.A."/>
            <person name="Payseur B.A."/>
            <person name="Bourque G."/>
            <person name="Lopez-Otin C."/>
            <person name="Puente X.S."/>
            <person name="Chakrabarti K."/>
            <person name="Chatterji S."/>
            <person name="Dewey C."/>
            <person name="Pachter L."/>
            <person name="Bray N."/>
            <person name="Yap V.B."/>
            <person name="Caspi A."/>
            <person name="Tesler G."/>
            <person name="Pevzner P.A."/>
            <person name="Haussler D."/>
            <person name="Roskin K.M."/>
            <person name="Baertsch R."/>
            <person name="Clawson H."/>
            <person name="Furey T.S."/>
            <person name="Hinrichs A.S."/>
            <person name="Karolchik D."/>
            <person name="Kent W.J."/>
            <person name="Rosenbloom K.R."/>
            <person name="Trumbower H."/>
            <person name="Weirauch M."/>
            <person name="Cooper D.N."/>
            <person name="Stenson P.D."/>
            <person name="Ma B."/>
            <person name="Brent M."/>
            <person name="Arumugam M."/>
            <person name="Shteynberg D."/>
            <person name="Copley R.R."/>
            <person name="Taylor M.S."/>
            <person name="Riethman H."/>
            <person name="Mudunuri U."/>
            <person name="Peterson J."/>
            <person name="Guyer M."/>
            <person name="Felsenfeld A."/>
            <person name="Old S."/>
            <person name="Mockrin S."/>
            <person name="Collins F.S."/>
        </authorList>
    </citation>
    <scope>NUCLEOTIDE SEQUENCE [LARGE SCALE GENOMIC DNA]</scope>
    <source>
        <strain>Brown Norway</strain>
    </source>
</reference>
<reference key="2">
    <citation type="journal article" date="2005" name="J. Cell Sci.">
        <title>Non-canonical YXXGPhi endocytic motifs: recognition by AP2 and preferential utilization in P2X4 receptors.</title>
        <authorList>
            <person name="Royle S.J."/>
            <person name="Qureshi O.S."/>
            <person name="Bobanovic L.K."/>
            <person name="Evans P.R."/>
            <person name="Owen D.J."/>
            <person name="Murrell-Lagnado R.D."/>
        </authorList>
    </citation>
    <scope>INTERACTION WITH P2X4</scope>
</reference>
<sequence length="423" mass="48167">MSASAVFILDVKGKPLISRNYKGDVPMTEIDHFMPLLMQREEEGMLAPLLSHGRVHFLWIKHSNLYLVATTLKNANASLVYSFLYKTVEVFCEYFKELEEESIRDNFVIVYELLDELMDFGFPQTTDSKILQEYITQQGNKLETGKSRVPPTVTNAVSWRSEGIKYKKNEVFIDVIESVNLLVNANGSVLLSEIVGTIKLKVFLSGMPELRLGLNDRVLFELTGRSKNKSVELEDVKFHQCVRLSRFDNDRTISFIPPDGDFELMSYRLSTQVRPRVDXESVIEKFSHSRVEIMVKAKGQFKKQSVANGVEISVPVPSDADSPRFKTSVGSAKYVPEKNVVIWSIKSFPGGKEYLMRAHFGLPSVETEEVEGRPPIGVKFEIPYFTVSGIQVRYMKIIEKSGYQALPWVRYITQSGDYQLRTS</sequence>